<comment type="function">
    <text evidence="1">Produces ATP from ADP in the presence of a proton gradient across the membrane.</text>
</comment>
<comment type="subunit">
    <text>F-type ATPases have 2 components, CF(1) - the catalytic core - and CF(0) - the membrane proton channel. CF(1) has five subunits: alpha(3), beta(3), gamma(1), delta(1), epsilon(1). CF(0) has three main subunits: a, b and c.</text>
</comment>
<comment type="subcellular location">
    <subcellularLocation>
        <location evidence="1">Cell membrane</location>
        <topology evidence="1">Peripheral membrane protein</topology>
    </subcellularLocation>
</comment>
<comment type="similarity">
    <text evidence="1">Belongs to the ATPase epsilon chain family.</text>
</comment>
<accession>Q67TB6</accession>
<sequence>MADMSLTIITPERTVLRDAPADAVVVPVVDGSMGILKNHAPMVANLRIGVLRYKQDGVYKRVAVTGGFVEVSENRITVLADAAELAESIDVMRAMEAKRRAEARLRDRKANIDRTRAEAALRRAMVRLRAAGALDHDKD</sequence>
<keyword id="KW-0066">ATP synthesis</keyword>
<keyword id="KW-1003">Cell membrane</keyword>
<keyword id="KW-0139">CF(1)</keyword>
<keyword id="KW-0375">Hydrogen ion transport</keyword>
<keyword id="KW-0406">Ion transport</keyword>
<keyword id="KW-0472">Membrane</keyword>
<keyword id="KW-1185">Reference proteome</keyword>
<keyword id="KW-0813">Transport</keyword>
<feature type="chain" id="PRO_0000188224" description="ATP synthase epsilon chain">
    <location>
        <begin position="1"/>
        <end position="139"/>
    </location>
</feature>
<reference key="1">
    <citation type="journal article" date="2004" name="Nucleic Acids Res.">
        <title>Genome sequence of Symbiobacterium thermophilum, an uncultivable bacterium that depends on microbial commensalism.</title>
        <authorList>
            <person name="Ueda K."/>
            <person name="Yamashita A."/>
            <person name="Ishikawa J."/>
            <person name="Shimada M."/>
            <person name="Watsuji T."/>
            <person name="Morimura K."/>
            <person name="Ikeda H."/>
            <person name="Hattori M."/>
            <person name="Beppu T."/>
        </authorList>
    </citation>
    <scope>NUCLEOTIDE SEQUENCE [LARGE SCALE GENOMIC DNA]</scope>
    <source>
        <strain>DSM 24528 / JCM 14929 / IAM 14863 / T</strain>
    </source>
</reference>
<name>ATPE_SYMTH</name>
<organism>
    <name type="scientific">Symbiobacterium thermophilum (strain DSM 24528 / JCM 14929 / IAM 14863 / T)</name>
    <dbReference type="NCBI Taxonomy" id="292459"/>
    <lineage>
        <taxon>Bacteria</taxon>
        <taxon>Bacillati</taxon>
        <taxon>Bacillota</taxon>
        <taxon>Clostridia</taxon>
        <taxon>Eubacteriales</taxon>
        <taxon>Symbiobacteriaceae</taxon>
        <taxon>Symbiobacterium</taxon>
    </lineage>
</organism>
<dbReference type="EMBL" id="AP006840">
    <property type="protein sequence ID" value="BAD39077.1"/>
    <property type="molecule type" value="Genomic_DNA"/>
</dbReference>
<dbReference type="RefSeq" id="WP_011194227.1">
    <property type="nucleotide sequence ID" value="NC_006177.1"/>
</dbReference>
<dbReference type="SMR" id="Q67TB6"/>
<dbReference type="STRING" id="292459.STH92"/>
<dbReference type="KEGG" id="sth:STH92"/>
<dbReference type="eggNOG" id="COG0355">
    <property type="taxonomic scope" value="Bacteria"/>
</dbReference>
<dbReference type="HOGENOM" id="CLU_084338_1_3_9"/>
<dbReference type="OrthoDB" id="9804110at2"/>
<dbReference type="Proteomes" id="UP000000417">
    <property type="component" value="Chromosome"/>
</dbReference>
<dbReference type="GO" id="GO:0005886">
    <property type="term" value="C:plasma membrane"/>
    <property type="evidence" value="ECO:0007669"/>
    <property type="project" value="UniProtKB-SubCell"/>
</dbReference>
<dbReference type="GO" id="GO:0045259">
    <property type="term" value="C:proton-transporting ATP synthase complex"/>
    <property type="evidence" value="ECO:0007669"/>
    <property type="project" value="UniProtKB-KW"/>
</dbReference>
<dbReference type="GO" id="GO:0005524">
    <property type="term" value="F:ATP binding"/>
    <property type="evidence" value="ECO:0007669"/>
    <property type="project" value="UniProtKB-UniRule"/>
</dbReference>
<dbReference type="GO" id="GO:0046933">
    <property type="term" value="F:proton-transporting ATP synthase activity, rotational mechanism"/>
    <property type="evidence" value="ECO:0007669"/>
    <property type="project" value="UniProtKB-UniRule"/>
</dbReference>
<dbReference type="CDD" id="cd12152">
    <property type="entry name" value="F1-ATPase_delta"/>
    <property type="match status" value="1"/>
</dbReference>
<dbReference type="Gene3D" id="1.20.5.440">
    <property type="entry name" value="ATP synthase delta/epsilon subunit, C-terminal domain"/>
    <property type="match status" value="1"/>
</dbReference>
<dbReference type="Gene3D" id="2.60.15.10">
    <property type="entry name" value="F0F1 ATP synthase delta/epsilon subunit, N-terminal"/>
    <property type="match status" value="1"/>
</dbReference>
<dbReference type="HAMAP" id="MF_00530">
    <property type="entry name" value="ATP_synth_epsil_bac"/>
    <property type="match status" value="1"/>
</dbReference>
<dbReference type="InterPro" id="IPR036794">
    <property type="entry name" value="ATP_F1_dsu/esu_C_sf"/>
</dbReference>
<dbReference type="InterPro" id="IPR001469">
    <property type="entry name" value="ATP_synth_F1_dsu/esu"/>
</dbReference>
<dbReference type="InterPro" id="IPR020546">
    <property type="entry name" value="ATP_synth_F1_dsu/esu_N"/>
</dbReference>
<dbReference type="InterPro" id="IPR020547">
    <property type="entry name" value="ATP_synth_F1_esu_C"/>
</dbReference>
<dbReference type="InterPro" id="IPR036771">
    <property type="entry name" value="ATPsynth_dsu/esu_N"/>
</dbReference>
<dbReference type="NCBIfam" id="TIGR01216">
    <property type="entry name" value="ATP_synt_epsi"/>
    <property type="match status" value="1"/>
</dbReference>
<dbReference type="NCBIfam" id="NF001846">
    <property type="entry name" value="PRK00571.1-3"/>
    <property type="match status" value="1"/>
</dbReference>
<dbReference type="NCBIfam" id="NF009980">
    <property type="entry name" value="PRK13446.1"/>
    <property type="match status" value="1"/>
</dbReference>
<dbReference type="PANTHER" id="PTHR13822">
    <property type="entry name" value="ATP SYNTHASE DELTA/EPSILON CHAIN"/>
    <property type="match status" value="1"/>
</dbReference>
<dbReference type="PANTHER" id="PTHR13822:SF10">
    <property type="entry name" value="ATP SYNTHASE EPSILON CHAIN, CHLOROPLASTIC"/>
    <property type="match status" value="1"/>
</dbReference>
<dbReference type="Pfam" id="PF00401">
    <property type="entry name" value="ATP-synt_DE"/>
    <property type="match status" value="1"/>
</dbReference>
<dbReference type="Pfam" id="PF02823">
    <property type="entry name" value="ATP-synt_DE_N"/>
    <property type="match status" value="1"/>
</dbReference>
<dbReference type="SUPFAM" id="SSF46604">
    <property type="entry name" value="Epsilon subunit of F1F0-ATP synthase C-terminal domain"/>
    <property type="match status" value="1"/>
</dbReference>
<dbReference type="SUPFAM" id="SSF51344">
    <property type="entry name" value="Epsilon subunit of F1F0-ATP synthase N-terminal domain"/>
    <property type="match status" value="1"/>
</dbReference>
<evidence type="ECO:0000255" key="1">
    <source>
        <dbReference type="HAMAP-Rule" id="MF_00530"/>
    </source>
</evidence>
<gene>
    <name evidence="1" type="primary">atpC</name>
    <name type="ordered locus">STH92</name>
</gene>
<protein>
    <recommendedName>
        <fullName evidence="1">ATP synthase epsilon chain</fullName>
    </recommendedName>
    <alternativeName>
        <fullName evidence="1">ATP synthase F1 sector epsilon subunit</fullName>
    </alternativeName>
    <alternativeName>
        <fullName evidence="1">F-ATPase epsilon subunit</fullName>
    </alternativeName>
</protein>
<proteinExistence type="inferred from homology"/>